<sequence length="418" mass="47352">MKIKDFNIECDNLKIEENEFSKGSFAKVYKGSYYGNPVCVKVIKKDTLIDKESWVFLKREIGILKNLLNQGHKNIIRFIGIGEKDSLLFLVTELINGGDLGNILLDHKFHIPWSLRVKIAKDIAEGMEYLHSKQIMHRDLKSNNLLLGRNWTIKICDFGFAKEITIQNPLSMTICGTDEFMSPEVILGIQYSYSADIYSFGMVLLELITRSKLDERLPQNNFDIDYEELQNKIPSECPREFLELSMKCCNYDPNDRPSFTDIVQTLDQLAIKLVKETPDGPYPSTPIVVSNPHFDDQSINDWCMLSLIPDDCLENLNEFAEIENNINNNNNNNNNNNNKNNINNNNNNNNNNNNNNNNNNNCKVICENCASPQSTSSVNSSFSNSSLGSNGSNSSGTSTSSGGKKRSQKRKSWKCLIN</sequence>
<name>Y9865_DICDI</name>
<keyword id="KW-0067">ATP-binding</keyword>
<keyword id="KW-0418">Kinase</keyword>
<keyword id="KW-0547">Nucleotide-binding</keyword>
<keyword id="KW-1185">Reference proteome</keyword>
<keyword id="KW-0723">Serine/threonine-protein kinase</keyword>
<keyword id="KW-0808">Transferase</keyword>
<feature type="chain" id="PRO_0000355164" description="Probable serine/threonine-protein kinase DDB_G0280461">
    <location>
        <begin position="1"/>
        <end position="418"/>
    </location>
</feature>
<feature type="domain" description="Protein kinase" evidence="1">
    <location>
        <begin position="14"/>
        <end position="271"/>
    </location>
</feature>
<feature type="region of interest" description="Disordered" evidence="3">
    <location>
        <begin position="327"/>
        <end position="356"/>
    </location>
</feature>
<feature type="region of interest" description="Disordered" evidence="3">
    <location>
        <begin position="377"/>
        <end position="418"/>
    </location>
</feature>
<feature type="compositionally biased region" description="Low complexity" evidence="3">
    <location>
        <begin position="377"/>
        <end position="402"/>
    </location>
</feature>
<feature type="compositionally biased region" description="Basic residues" evidence="3">
    <location>
        <begin position="403"/>
        <end position="418"/>
    </location>
</feature>
<feature type="active site" description="Proton acceptor" evidence="1 2">
    <location>
        <position position="139"/>
    </location>
</feature>
<feature type="binding site" evidence="1">
    <location>
        <begin position="20"/>
        <end position="28"/>
    </location>
    <ligand>
        <name>ATP</name>
        <dbReference type="ChEBI" id="CHEBI:30616"/>
    </ligand>
</feature>
<feature type="binding site" evidence="1">
    <location>
        <position position="41"/>
    </location>
    <ligand>
        <name>ATP</name>
        <dbReference type="ChEBI" id="CHEBI:30616"/>
    </ligand>
</feature>
<protein>
    <recommendedName>
        <fullName>Probable serine/threonine-protein kinase DDB_G0280461</fullName>
        <ecNumber>2.7.11.1</ecNumber>
    </recommendedName>
</protein>
<gene>
    <name type="ORF">DDB_G0280461</name>
</gene>
<proteinExistence type="inferred from homology"/>
<reference key="1">
    <citation type="journal article" date="2005" name="Nature">
        <title>The genome of the social amoeba Dictyostelium discoideum.</title>
        <authorList>
            <person name="Eichinger L."/>
            <person name="Pachebat J.A."/>
            <person name="Gloeckner G."/>
            <person name="Rajandream M.A."/>
            <person name="Sucgang R."/>
            <person name="Berriman M."/>
            <person name="Song J."/>
            <person name="Olsen R."/>
            <person name="Szafranski K."/>
            <person name="Xu Q."/>
            <person name="Tunggal B."/>
            <person name="Kummerfeld S."/>
            <person name="Madera M."/>
            <person name="Konfortov B.A."/>
            <person name="Rivero F."/>
            <person name="Bankier A.T."/>
            <person name="Lehmann R."/>
            <person name="Hamlin N."/>
            <person name="Davies R."/>
            <person name="Gaudet P."/>
            <person name="Fey P."/>
            <person name="Pilcher K."/>
            <person name="Chen G."/>
            <person name="Saunders D."/>
            <person name="Sodergren E.J."/>
            <person name="Davis P."/>
            <person name="Kerhornou A."/>
            <person name="Nie X."/>
            <person name="Hall N."/>
            <person name="Anjard C."/>
            <person name="Hemphill L."/>
            <person name="Bason N."/>
            <person name="Farbrother P."/>
            <person name="Desany B."/>
            <person name="Just E."/>
            <person name="Morio T."/>
            <person name="Rost R."/>
            <person name="Churcher C.M."/>
            <person name="Cooper J."/>
            <person name="Haydock S."/>
            <person name="van Driessche N."/>
            <person name="Cronin A."/>
            <person name="Goodhead I."/>
            <person name="Muzny D.M."/>
            <person name="Mourier T."/>
            <person name="Pain A."/>
            <person name="Lu M."/>
            <person name="Harper D."/>
            <person name="Lindsay R."/>
            <person name="Hauser H."/>
            <person name="James K.D."/>
            <person name="Quiles M."/>
            <person name="Madan Babu M."/>
            <person name="Saito T."/>
            <person name="Buchrieser C."/>
            <person name="Wardroper A."/>
            <person name="Felder M."/>
            <person name="Thangavelu M."/>
            <person name="Johnson D."/>
            <person name="Knights A."/>
            <person name="Loulseged H."/>
            <person name="Mungall K.L."/>
            <person name="Oliver K."/>
            <person name="Price C."/>
            <person name="Quail M.A."/>
            <person name="Urushihara H."/>
            <person name="Hernandez J."/>
            <person name="Rabbinowitsch E."/>
            <person name="Steffen D."/>
            <person name="Sanders M."/>
            <person name="Ma J."/>
            <person name="Kohara Y."/>
            <person name="Sharp S."/>
            <person name="Simmonds M.N."/>
            <person name="Spiegler S."/>
            <person name="Tivey A."/>
            <person name="Sugano S."/>
            <person name="White B."/>
            <person name="Walker D."/>
            <person name="Woodward J.R."/>
            <person name="Winckler T."/>
            <person name="Tanaka Y."/>
            <person name="Shaulsky G."/>
            <person name="Schleicher M."/>
            <person name="Weinstock G.M."/>
            <person name="Rosenthal A."/>
            <person name="Cox E.C."/>
            <person name="Chisholm R.L."/>
            <person name="Gibbs R.A."/>
            <person name="Loomis W.F."/>
            <person name="Platzer M."/>
            <person name="Kay R.R."/>
            <person name="Williams J.G."/>
            <person name="Dear P.H."/>
            <person name="Noegel A.A."/>
            <person name="Barrell B.G."/>
            <person name="Kuspa A."/>
        </authorList>
    </citation>
    <scope>NUCLEOTIDE SEQUENCE [LARGE SCALE GENOMIC DNA]</scope>
    <source>
        <strain>AX4</strain>
    </source>
</reference>
<comment type="catalytic activity">
    <reaction>
        <text>L-seryl-[protein] + ATP = O-phospho-L-seryl-[protein] + ADP + H(+)</text>
        <dbReference type="Rhea" id="RHEA:17989"/>
        <dbReference type="Rhea" id="RHEA-COMP:9863"/>
        <dbReference type="Rhea" id="RHEA-COMP:11604"/>
        <dbReference type="ChEBI" id="CHEBI:15378"/>
        <dbReference type="ChEBI" id="CHEBI:29999"/>
        <dbReference type="ChEBI" id="CHEBI:30616"/>
        <dbReference type="ChEBI" id="CHEBI:83421"/>
        <dbReference type="ChEBI" id="CHEBI:456216"/>
        <dbReference type="EC" id="2.7.11.1"/>
    </reaction>
</comment>
<comment type="catalytic activity">
    <reaction>
        <text>L-threonyl-[protein] + ATP = O-phospho-L-threonyl-[protein] + ADP + H(+)</text>
        <dbReference type="Rhea" id="RHEA:46608"/>
        <dbReference type="Rhea" id="RHEA-COMP:11060"/>
        <dbReference type="Rhea" id="RHEA-COMP:11605"/>
        <dbReference type="ChEBI" id="CHEBI:15378"/>
        <dbReference type="ChEBI" id="CHEBI:30013"/>
        <dbReference type="ChEBI" id="CHEBI:30616"/>
        <dbReference type="ChEBI" id="CHEBI:61977"/>
        <dbReference type="ChEBI" id="CHEBI:456216"/>
        <dbReference type="EC" id="2.7.11.1"/>
    </reaction>
</comment>
<comment type="similarity">
    <text evidence="4">Belongs to the protein kinase superfamily. TKL Ser/Thr protein kinase family.</text>
</comment>
<evidence type="ECO:0000255" key="1">
    <source>
        <dbReference type="PROSITE-ProRule" id="PRU00159"/>
    </source>
</evidence>
<evidence type="ECO:0000255" key="2">
    <source>
        <dbReference type="PROSITE-ProRule" id="PRU10027"/>
    </source>
</evidence>
<evidence type="ECO:0000256" key="3">
    <source>
        <dbReference type="SAM" id="MobiDB-lite"/>
    </source>
</evidence>
<evidence type="ECO:0000305" key="4"/>
<accession>Q54VC0</accession>
<organism>
    <name type="scientific">Dictyostelium discoideum</name>
    <name type="common">Social amoeba</name>
    <dbReference type="NCBI Taxonomy" id="44689"/>
    <lineage>
        <taxon>Eukaryota</taxon>
        <taxon>Amoebozoa</taxon>
        <taxon>Evosea</taxon>
        <taxon>Eumycetozoa</taxon>
        <taxon>Dictyostelia</taxon>
        <taxon>Dictyosteliales</taxon>
        <taxon>Dictyosteliaceae</taxon>
        <taxon>Dictyostelium</taxon>
    </lineage>
</organism>
<dbReference type="EC" id="2.7.11.1"/>
<dbReference type="EMBL" id="AAFI02000036">
    <property type="protein sequence ID" value="EAL67209.1"/>
    <property type="molecule type" value="Genomic_DNA"/>
</dbReference>
<dbReference type="RefSeq" id="XP_641189.1">
    <property type="nucleotide sequence ID" value="XM_636097.1"/>
</dbReference>
<dbReference type="SMR" id="Q54VC0"/>
<dbReference type="FunCoup" id="Q54VC0">
    <property type="interactions" value="18"/>
</dbReference>
<dbReference type="STRING" id="44689.Q54VC0"/>
<dbReference type="PaxDb" id="44689-DDB0229865"/>
<dbReference type="EnsemblProtists" id="EAL67209">
    <property type="protein sequence ID" value="EAL67209"/>
    <property type="gene ID" value="DDB_G0280461"/>
</dbReference>
<dbReference type="GeneID" id="8622570"/>
<dbReference type="KEGG" id="ddi:DDB_G0280461"/>
<dbReference type="dictyBase" id="DDB_G0280461"/>
<dbReference type="VEuPathDB" id="AmoebaDB:DDB_G0280461"/>
<dbReference type="eggNOG" id="ENOG502RYA2">
    <property type="taxonomic scope" value="Eukaryota"/>
</dbReference>
<dbReference type="HOGENOM" id="CLU_657921_0_0_1"/>
<dbReference type="InParanoid" id="Q54VC0"/>
<dbReference type="OMA" id="KPKLMIV"/>
<dbReference type="PhylomeDB" id="Q54VC0"/>
<dbReference type="PRO" id="PR:Q54VC0"/>
<dbReference type="Proteomes" id="UP000002195">
    <property type="component" value="Chromosome 3"/>
</dbReference>
<dbReference type="GO" id="GO:0005737">
    <property type="term" value="C:cytoplasm"/>
    <property type="evidence" value="ECO:0000318"/>
    <property type="project" value="GO_Central"/>
</dbReference>
<dbReference type="GO" id="GO:0005524">
    <property type="term" value="F:ATP binding"/>
    <property type="evidence" value="ECO:0007669"/>
    <property type="project" value="UniProtKB-KW"/>
</dbReference>
<dbReference type="GO" id="GO:0004672">
    <property type="term" value="F:protein kinase activity"/>
    <property type="evidence" value="ECO:0000318"/>
    <property type="project" value="GO_Central"/>
</dbReference>
<dbReference type="GO" id="GO:0106310">
    <property type="term" value="F:protein serine kinase activity"/>
    <property type="evidence" value="ECO:0007669"/>
    <property type="project" value="RHEA"/>
</dbReference>
<dbReference type="GO" id="GO:0004674">
    <property type="term" value="F:protein serine/threonine kinase activity"/>
    <property type="evidence" value="ECO:0007669"/>
    <property type="project" value="UniProtKB-KW"/>
</dbReference>
<dbReference type="GO" id="GO:0007165">
    <property type="term" value="P:signal transduction"/>
    <property type="evidence" value="ECO:0000318"/>
    <property type="project" value="GO_Central"/>
</dbReference>
<dbReference type="CDD" id="cd13999">
    <property type="entry name" value="STKc_MAP3K-like"/>
    <property type="match status" value="1"/>
</dbReference>
<dbReference type="Gene3D" id="1.10.510.10">
    <property type="entry name" value="Transferase(Phosphotransferase) domain 1"/>
    <property type="match status" value="1"/>
</dbReference>
<dbReference type="InterPro" id="IPR050940">
    <property type="entry name" value="Actin_reg-Ser/Thr_kinase"/>
</dbReference>
<dbReference type="InterPro" id="IPR011009">
    <property type="entry name" value="Kinase-like_dom_sf"/>
</dbReference>
<dbReference type="InterPro" id="IPR000719">
    <property type="entry name" value="Prot_kinase_dom"/>
</dbReference>
<dbReference type="InterPro" id="IPR001245">
    <property type="entry name" value="Ser-Thr/Tyr_kinase_cat_dom"/>
</dbReference>
<dbReference type="InterPro" id="IPR008271">
    <property type="entry name" value="Ser/Thr_kinase_AS"/>
</dbReference>
<dbReference type="PANTHER" id="PTHR46485:SF5">
    <property type="entry name" value="CENTER DIVIDER, ISOFORM A"/>
    <property type="match status" value="1"/>
</dbReference>
<dbReference type="PANTHER" id="PTHR46485">
    <property type="entry name" value="LIM DOMAIN KINASE 1"/>
    <property type="match status" value="1"/>
</dbReference>
<dbReference type="Pfam" id="PF00069">
    <property type="entry name" value="Pkinase"/>
    <property type="match status" value="1"/>
</dbReference>
<dbReference type="PRINTS" id="PR00109">
    <property type="entry name" value="TYRKINASE"/>
</dbReference>
<dbReference type="SMART" id="SM00220">
    <property type="entry name" value="S_TKc"/>
    <property type="match status" value="1"/>
</dbReference>
<dbReference type="SUPFAM" id="SSF56112">
    <property type="entry name" value="Protein kinase-like (PK-like)"/>
    <property type="match status" value="1"/>
</dbReference>
<dbReference type="PROSITE" id="PS50011">
    <property type="entry name" value="PROTEIN_KINASE_DOM"/>
    <property type="match status" value="1"/>
</dbReference>
<dbReference type="PROSITE" id="PS00108">
    <property type="entry name" value="PROTEIN_KINASE_ST"/>
    <property type="match status" value="1"/>
</dbReference>